<evidence type="ECO:0000255" key="1">
    <source>
        <dbReference type="HAMAP-Rule" id="MF_01422"/>
    </source>
</evidence>
<evidence type="ECO:0000256" key="2">
    <source>
        <dbReference type="SAM" id="MobiDB-lite"/>
    </source>
</evidence>
<sequence length="443" mass="47221">MKAQSKRTSRLLILLGIAVAIIVAVFVWRHFSATPDGSTGAQQHAVGNNPARAGGRRNMPMPPVQAATATEQAVPRYLTGLGTVIAANTVTVTSQVDGQLMAIHFTEGQQVNAGDLLVEIDPRPYQVQLTQAQGQLAKDQATLDNARRDLARYQKLAKTGLISQQDLDTQASLVRQSEGSVKADQGAIDSAKLQLTYSRITAPISGKVGLKQVDVGNYITSGTTTPIVVITQTHPVDVVFTLPESDIPAIMQAQKNAAKNNTTVPVEAWDRTNKQMLAQGYLLSIDNQIDTTTGTIKLKARFANEDDVLFPNQFVNARIKVDLLQNAVVVPTAAVQMGNEGSFVWTLNDENKVSKHLVTTGIQDSKQVVISAGLDAGQRVVTDGIDRLTEGLQVEVVTPRSADTTPTDAAEKPATAEKATHRRGEKSATGASAGSTTTAAEKS</sequence>
<name>MDTA_YERE8</name>
<protein>
    <recommendedName>
        <fullName evidence="1">Multidrug resistance protein MdtA</fullName>
    </recommendedName>
    <alternativeName>
        <fullName evidence="1">Multidrug transporter MdtA</fullName>
    </alternativeName>
</protein>
<accession>A1JKX1</accession>
<feature type="signal peptide" evidence="1">
    <location>
        <begin position="1"/>
        <end position="24"/>
    </location>
</feature>
<feature type="chain" id="PRO_0000302619" description="Multidrug resistance protein MdtA">
    <location>
        <begin position="25"/>
        <end position="443"/>
    </location>
</feature>
<feature type="region of interest" description="Disordered" evidence="2">
    <location>
        <begin position="36"/>
        <end position="57"/>
    </location>
</feature>
<feature type="region of interest" description="Disordered" evidence="2">
    <location>
        <begin position="398"/>
        <end position="443"/>
    </location>
</feature>
<feature type="compositionally biased region" description="Polar residues" evidence="2">
    <location>
        <begin position="36"/>
        <end position="46"/>
    </location>
</feature>
<feature type="compositionally biased region" description="Basic and acidic residues" evidence="2">
    <location>
        <begin position="409"/>
        <end position="419"/>
    </location>
</feature>
<feature type="compositionally biased region" description="Low complexity" evidence="2">
    <location>
        <begin position="427"/>
        <end position="443"/>
    </location>
</feature>
<dbReference type="EMBL" id="AM286415">
    <property type="protein sequence ID" value="CAL11205.1"/>
    <property type="molecule type" value="Genomic_DNA"/>
</dbReference>
<dbReference type="RefSeq" id="WP_011815802.1">
    <property type="nucleotide sequence ID" value="NC_008800.1"/>
</dbReference>
<dbReference type="RefSeq" id="YP_001005439.1">
    <property type="nucleotide sequence ID" value="NC_008800.1"/>
</dbReference>
<dbReference type="SMR" id="A1JKX1"/>
<dbReference type="KEGG" id="yen:YE1109"/>
<dbReference type="PATRIC" id="fig|393305.7.peg.1210"/>
<dbReference type="eggNOG" id="COG0845">
    <property type="taxonomic scope" value="Bacteria"/>
</dbReference>
<dbReference type="HOGENOM" id="CLU_018816_2_0_6"/>
<dbReference type="OrthoDB" id="9783047at2"/>
<dbReference type="Proteomes" id="UP000000642">
    <property type="component" value="Chromosome"/>
</dbReference>
<dbReference type="GO" id="GO:1990281">
    <property type="term" value="C:efflux pump complex"/>
    <property type="evidence" value="ECO:0007669"/>
    <property type="project" value="TreeGrafter"/>
</dbReference>
<dbReference type="GO" id="GO:0005886">
    <property type="term" value="C:plasma membrane"/>
    <property type="evidence" value="ECO:0007669"/>
    <property type="project" value="UniProtKB-SubCell"/>
</dbReference>
<dbReference type="GO" id="GO:0015562">
    <property type="term" value="F:efflux transmembrane transporter activity"/>
    <property type="evidence" value="ECO:0007669"/>
    <property type="project" value="TreeGrafter"/>
</dbReference>
<dbReference type="FunFam" id="2.40.420.20:FF:000001">
    <property type="entry name" value="Efflux RND transporter periplasmic adaptor subunit"/>
    <property type="match status" value="1"/>
</dbReference>
<dbReference type="FunFam" id="1.10.287.470:FF:000005">
    <property type="entry name" value="Multidrug resistance protein MdtA"/>
    <property type="match status" value="1"/>
</dbReference>
<dbReference type="FunFam" id="2.40.30.170:FF:000006">
    <property type="entry name" value="Multidrug resistance protein MdtA"/>
    <property type="match status" value="1"/>
</dbReference>
<dbReference type="Gene3D" id="2.40.30.170">
    <property type="match status" value="1"/>
</dbReference>
<dbReference type="Gene3D" id="2.40.420.20">
    <property type="match status" value="1"/>
</dbReference>
<dbReference type="Gene3D" id="2.40.50.100">
    <property type="match status" value="1"/>
</dbReference>
<dbReference type="Gene3D" id="1.10.287.470">
    <property type="entry name" value="Helix hairpin bin"/>
    <property type="match status" value="1"/>
</dbReference>
<dbReference type="HAMAP" id="MF_01422">
    <property type="entry name" value="MdtA"/>
    <property type="match status" value="1"/>
</dbReference>
<dbReference type="InterPro" id="IPR032317">
    <property type="entry name" value="CusB_D23"/>
</dbReference>
<dbReference type="InterPro" id="IPR022824">
    <property type="entry name" value="Multidrug-R_MdtA"/>
</dbReference>
<dbReference type="InterPro" id="IPR006143">
    <property type="entry name" value="RND_pump_MFP"/>
</dbReference>
<dbReference type="NCBIfam" id="NF008589">
    <property type="entry name" value="PRK11556.1"/>
    <property type="match status" value="1"/>
</dbReference>
<dbReference type="NCBIfam" id="TIGR01730">
    <property type="entry name" value="RND_mfp"/>
    <property type="match status" value="1"/>
</dbReference>
<dbReference type="PANTHER" id="PTHR30469">
    <property type="entry name" value="MULTIDRUG RESISTANCE PROTEIN MDTA"/>
    <property type="match status" value="1"/>
</dbReference>
<dbReference type="PANTHER" id="PTHR30469:SF12">
    <property type="entry name" value="MULTIDRUG RESISTANCE PROTEIN MDTA"/>
    <property type="match status" value="1"/>
</dbReference>
<dbReference type="Pfam" id="PF16576">
    <property type="entry name" value="HlyD_D23"/>
    <property type="match status" value="1"/>
</dbReference>
<dbReference type="SUPFAM" id="SSF111369">
    <property type="entry name" value="HlyD-like secretion proteins"/>
    <property type="match status" value="1"/>
</dbReference>
<proteinExistence type="inferred from homology"/>
<reference key="1">
    <citation type="journal article" date="2006" name="PLoS Genet.">
        <title>The complete genome sequence and comparative genome analysis of the high pathogenicity Yersinia enterocolitica strain 8081.</title>
        <authorList>
            <person name="Thomson N.R."/>
            <person name="Howard S."/>
            <person name="Wren B.W."/>
            <person name="Holden M.T.G."/>
            <person name="Crossman L."/>
            <person name="Challis G.L."/>
            <person name="Churcher C."/>
            <person name="Mungall K."/>
            <person name="Brooks K."/>
            <person name="Chillingworth T."/>
            <person name="Feltwell T."/>
            <person name="Abdellah Z."/>
            <person name="Hauser H."/>
            <person name="Jagels K."/>
            <person name="Maddison M."/>
            <person name="Moule S."/>
            <person name="Sanders M."/>
            <person name="Whitehead S."/>
            <person name="Quail M.A."/>
            <person name="Dougan G."/>
            <person name="Parkhill J."/>
            <person name="Prentice M.B."/>
        </authorList>
    </citation>
    <scope>NUCLEOTIDE SEQUENCE [LARGE SCALE GENOMIC DNA]</scope>
    <source>
        <strain>NCTC 13174 / 8081</strain>
    </source>
</reference>
<comment type="subunit">
    <text evidence="1">Part of a tripartite efflux system composed of MdtA, MdtB and MdtC.</text>
</comment>
<comment type="subcellular location">
    <subcellularLocation>
        <location evidence="1">Cell inner membrane</location>
        <topology evidence="1">Peripheral membrane protein</topology>
    </subcellularLocation>
</comment>
<comment type="similarity">
    <text evidence="1">Belongs to the membrane fusion protein (MFP) (TC 8.A.1) family.</text>
</comment>
<gene>
    <name evidence="1" type="primary">mdtA</name>
    <name type="ordered locus">YE1109</name>
</gene>
<organism>
    <name type="scientific">Yersinia enterocolitica serotype O:8 / biotype 1B (strain NCTC 13174 / 8081)</name>
    <dbReference type="NCBI Taxonomy" id="393305"/>
    <lineage>
        <taxon>Bacteria</taxon>
        <taxon>Pseudomonadati</taxon>
        <taxon>Pseudomonadota</taxon>
        <taxon>Gammaproteobacteria</taxon>
        <taxon>Enterobacterales</taxon>
        <taxon>Yersiniaceae</taxon>
        <taxon>Yersinia</taxon>
    </lineage>
</organism>
<keyword id="KW-0997">Cell inner membrane</keyword>
<keyword id="KW-1003">Cell membrane</keyword>
<keyword id="KW-0472">Membrane</keyword>
<keyword id="KW-0677">Repeat</keyword>
<keyword id="KW-0732">Signal</keyword>
<keyword id="KW-0813">Transport</keyword>